<sequence length="193" mass="21018">MSNPTLTFVTGNANKLREVQQIFSLTPNFPYELTNKDLDLPEIQGTTRDVAQAKCAAAAKALGGACITEDTALGFHALGGLPGPYIKDFMKTIGHDGLNKMLDGFEDRTASAICTFAYCAGPDEQVHLFEGRTEGVIVPPRGPTHFGWDPILEIKGTGLTYAEMDPKQKNTLSHRYKALTLLQDYLVGLSKQN</sequence>
<comment type="function">
    <text evidence="1">Pyrophosphatase that hydrolyzes non-canonical purine nucleotides such as inosine triphosphate (ITP), deoxyinosine triphosphate (dITP) or xanthosine 5'-triphosphate (XTP) to their respective monophosphate derivatives. The enzyme does not distinguish between the deoxy- and ribose forms. Probably excludes non-canonical purines from RNA and DNA precursor pools, thus preventing their incorporation into RNA and DNA and avoiding chromosomal lesions.</text>
</comment>
<comment type="catalytic activity">
    <reaction evidence="1">
        <text>ITP + H2O = IMP + diphosphate + H(+)</text>
        <dbReference type="Rhea" id="RHEA:29399"/>
        <dbReference type="ChEBI" id="CHEBI:15377"/>
        <dbReference type="ChEBI" id="CHEBI:15378"/>
        <dbReference type="ChEBI" id="CHEBI:33019"/>
        <dbReference type="ChEBI" id="CHEBI:58053"/>
        <dbReference type="ChEBI" id="CHEBI:61402"/>
        <dbReference type="EC" id="3.6.1.66"/>
    </reaction>
    <physiologicalReaction direction="left-to-right" evidence="1">
        <dbReference type="Rhea" id="RHEA:29400"/>
    </physiologicalReaction>
</comment>
<comment type="catalytic activity">
    <reaction evidence="1">
        <text>dITP + H2O = dIMP + diphosphate + H(+)</text>
        <dbReference type="Rhea" id="RHEA:28342"/>
        <dbReference type="ChEBI" id="CHEBI:15377"/>
        <dbReference type="ChEBI" id="CHEBI:15378"/>
        <dbReference type="ChEBI" id="CHEBI:33019"/>
        <dbReference type="ChEBI" id="CHEBI:61194"/>
        <dbReference type="ChEBI" id="CHEBI:61382"/>
        <dbReference type="EC" id="3.6.1.66"/>
    </reaction>
    <physiologicalReaction direction="left-to-right" evidence="1">
        <dbReference type="Rhea" id="RHEA:28343"/>
    </physiologicalReaction>
</comment>
<comment type="catalytic activity">
    <reaction evidence="1">
        <text>XTP + H2O = XMP + diphosphate + H(+)</text>
        <dbReference type="Rhea" id="RHEA:28610"/>
        <dbReference type="ChEBI" id="CHEBI:15377"/>
        <dbReference type="ChEBI" id="CHEBI:15378"/>
        <dbReference type="ChEBI" id="CHEBI:33019"/>
        <dbReference type="ChEBI" id="CHEBI:57464"/>
        <dbReference type="ChEBI" id="CHEBI:61314"/>
        <dbReference type="EC" id="3.6.1.66"/>
    </reaction>
    <physiologicalReaction direction="left-to-right" evidence="1">
        <dbReference type="Rhea" id="RHEA:28611"/>
    </physiologicalReaction>
</comment>
<comment type="cofactor">
    <cofactor evidence="1">
        <name>Mg(2+)</name>
        <dbReference type="ChEBI" id="CHEBI:18420"/>
    </cofactor>
    <cofactor evidence="1">
        <name>Mn(2+)</name>
        <dbReference type="ChEBI" id="CHEBI:29035"/>
    </cofactor>
    <text evidence="1">Binds 1 divalent metal cation per subunit; can use either Mg(2+) or Mn(2+).</text>
</comment>
<comment type="subunit">
    <text evidence="1">Homodimer.</text>
</comment>
<comment type="subcellular location">
    <subcellularLocation>
        <location evidence="1">Cytoplasm</location>
    </subcellularLocation>
    <subcellularLocation>
        <location evidence="1">Nucleus</location>
    </subcellularLocation>
</comment>
<comment type="similarity">
    <text evidence="1">Belongs to the HAM1 NTPase family.</text>
</comment>
<accession>Q4PD06</accession>
<accession>A0A0D1CCH8</accession>
<evidence type="ECO:0000255" key="1">
    <source>
        <dbReference type="HAMAP-Rule" id="MF_03148"/>
    </source>
</evidence>
<gene>
    <name type="ORF">UMAG_02007</name>
</gene>
<name>ITPA_MYCMD</name>
<protein>
    <recommendedName>
        <fullName evidence="1">Inosine triphosphate pyrophosphatase</fullName>
        <shortName evidence="1">ITPase</shortName>
        <shortName evidence="1">Inosine triphosphatase</shortName>
        <ecNumber evidence="1">3.6.1.66</ecNumber>
    </recommendedName>
    <alternativeName>
        <fullName evidence="1">Non-canonical purine NTP pyrophosphatase</fullName>
    </alternativeName>
    <alternativeName>
        <fullName evidence="1">Non-standard purine NTP pyrophosphatase</fullName>
    </alternativeName>
    <alternativeName>
        <fullName evidence="1">Nucleoside-triphosphate diphosphatase</fullName>
    </alternativeName>
    <alternativeName>
        <fullName evidence="1">Nucleoside-triphosphate pyrophosphatase</fullName>
        <shortName evidence="1">NTPase</shortName>
    </alternativeName>
    <alternativeName>
        <fullName evidence="1">XTP/dITP diphosphatase</fullName>
    </alternativeName>
</protein>
<reference key="1">
    <citation type="journal article" date="2006" name="Nature">
        <title>Insights from the genome of the biotrophic fungal plant pathogen Ustilago maydis.</title>
        <authorList>
            <person name="Kaemper J."/>
            <person name="Kahmann R."/>
            <person name="Boelker M."/>
            <person name="Ma L.-J."/>
            <person name="Brefort T."/>
            <person name="Saville B.J."/>
            <person name="Banuett F."/>
            <person name="Kronstad J.W."/>
            <person name="Gold S.E."/>
            <person name="Mueller O."/>
            <person name="Perlin M.H."/>
            <person name="Woesten H.A.B."/>
            <person name="de Vries R."/>
            <person name="Ruiz-Herrera J."/>
            <person name="Reynaga-Pena C.G."/>
            <person name="Snetselaar K."/>
            <person name="McCann M."/>
            <person name="Perez-Martin J."/>
            <person name="Feldbruegge M."/>
            <person name="Basse C.W."/>
            <person name="Steinberg G."/>
            <person name="Ibeas J.I."/>
            <person name="Holloman W."/>
            <person name="Guzman P."/>
            <person name="Farman M.L."/>
            <person name="Stajich J.E."/>
            <person name="Sentandreu R."/>
            <person name="Gonzalez-Prieto J.M."/>
            <person name="Kennell J.C."/>
            <person name="Molina L."/>
            <person name="Schirawski J."/>
            <person name="Mendoza-Mendoza A."/>
            <person name="Greilinger D."/>
            <person name="Muench K."/>
            <person name="Roessel N."/>
            <person name="Scherer M."/>
            <person name="Vranes M."/>
            <person name="Ladendorf O."/>
            <person name="Vincon V."/>
            <person name="Fuchs U."/>
            <person name="Sandrock B."/>
            <person name="Meng S."/>
            <person name="Ho E.C.H."/>
            <person name="Cahill M.J."/>
            <person name="Boyce K.J."/>
            <person name="Klose J."/>
            <person name="Klosterman S.J."/>
            <person name="Deelstra H.J."/>
            <person name="Ortiz-Castellanos L."/>
            <person name="Li W."/>
            <person name="Sanchez-Alonso P."/>
            <person name="Schreier P.H."/>
            <person name="Haeuser-Hahn I."/>
            <person name="Vaupel M."/>
            <person name="Koopmann E."/>
            <person name="Friedrich G."/>
            <person name="Voss H."/>
            <person name="Schlueter T."/>
            <person name="Margolis J."/>
            <person name="Platt D."/>
            <person name="Swimmer C."/>
            <person name="Gnirke A."/>
            <person name="Chen F."/>
            <person name="Vysotskaia V."/>
            <person name="Mannhaupt G."/>
            <person name="Gueldener U."/>
            <person name="Muensterkoetter M."/>
            <person name="Haase D."/>
            <person name="Oesterheld M."/>
            <person name="Mewes H.-W."/>
            <person name="Mauceli E.W."/>
            <person name="DeCaprio D."/>
            <person name="Wade C.M."/>
            <person name="Butler J."/>
            <person name="Young S.K."/>
            <person name="Jaffe D.B."/>
            <person name="Calvo S.E."/>
            <person name="Nusbaum C."/>
            <person name="Galagan J.E."/>
            <person name="Birren B.W."/>
        </authorList>
    </citation>
    <scope>NUCLEOTIDE SEQUENCE [LARGE SCALE GENOMIC DNA]</scope>
    <source>
        <strain>DSM 14603 / FGSC 9021 / UM521</strain>
    </source>
</reference>
<reference key="2">
    <citation type="submission" date="2014-09" db="EMBL/GenBank/DDBJ databases">
        <authorList>
            <person name="Gueldener U."/>
            <person name="Muensterkoetter M."/>
            <person name="Walter M.C."/>
            <person name="Mannhaupt G."/>
            <person name="Kahmann R."/>
        </authorList>
    </citation>
    <scope>GENOME REANNOTATION</scope>
    <source>
        <strain>DSM 14603 / FGSC 9021 / UM521</strain>
    </source>
</reference>
<keyword id="KW-0963">Cytoplasm</keyword>
<keyword id="KW-0378">Hydrolase</keyword>
<keyword id="KW-0460">Magnesium</keyword>
<keyword id="KW-0464">Manganese</keyword>
<keyword id="KW-0479">Metal-binding</keyword>
<keyword id="KW-0546">Nucleotide metabolism</keyword>
<keyword id="KW-0547">Nucleotide-binding</keyword>
<keyword id="KW-0539">Nucleus</keyword>
<keyword id="KW-1185">Reference proteome</keyword>
<organism>
    <name type="scientific">Mycosarcoma maydis</name>
    <name type="common">Corn smut fungus</name>
    <name type="synonym">Ustilago maydis</name>
    <dbReference type="NCBI Taxonomy" id="5270"/>
    <lineage>
        <taxon>Eukaryota</taxon>
        <taxon>Fungi</taxon>
        <taxon>Dikarya</taxon>
        <taxon>Basidiomycota</taxon>
        <taxon>Ustilaginomycotina</taxon>
        <taxon>Ustilaginomycetes</taxon>
        <taxon>Ustilaginales</taxon>
        <taxon>Ustilaginaceae</taxon>
        <taxon>Mycosarcoma</taxon>
    </lineage>
</organism>
<proteinExistence type="inferred from homology"/>
<dbReference type="EC" id="3.6.1.66" evidence="1"/>
<dbReference type="EMBL" id="CM003142">
    <property type="protein sequence ID" value="KIS70862.1"/>
    <property type="molecule type" value="Genomic_DNA"/>
</dbReference>
<dbReference type="RefSeq" id="XP_011387918.1">
    <property type="nucleotide sequence ID" value="XM_011389616.1"/>
</dbReference>
<dbReference type="SMR" id="Q4PD06"/>
<dbReference type="FunCoup" id="Q4PD06">
    <property type="interactions" value="510"/>
</dbReference>
<dbReference type="STRING" id="237631.Q4PD06"/>
<dbReference type="EnsemblFungi" id="KIS70862">
    <property type="protein sequence ID" value="KIS70862"/>
    <property type="gene ID" value="UMAG_02007"/>
</dbReference>
<dbReference type="GeneID" id="23562864"/>
<dbReference type="KEGG" id="uma:UMAG_02007"/>
<dbReference type="VEuPathDB" id="FungiDB:UMAG_02007"/>
<dbReference type="eggNOG" id="KOG3222">
    <property type="taxonomic scope" value="Eukaryota"/>
</dbReference>
<dbReference type="HOGENOM" id="CLU_082080_1_1_1"/>
<dbReference type="InParanoid" id="Q4PD06"/>
<dbReference type="OMA" id="YDPIFQP"/>
<dbReference type="OrthoDB" id="6288734at2759"/>
<dbReference type="Proteomes" id="UP000000561">
    <property type="component" value="Chromosome 3"/>
</dbReference>
<dbReference type="GO" id="GO:0005737">
    <property type="term" value="C:cytoplasm"/>
    <property type="evidence" value="ECO:0000318"/>
    <property type="project" value="GO_Central"/>
</dbReference>
<dbReference type="GO" id="GO:0005634">
    <property type="term" value="C:nucleus"/>
    <property type="evidence" value="ECO:0007669"/>
    <property type="project" value="UniProtKB-SubCell"/>
</dbReference>
<dbReference type="GO" id="GO:0035870">
    <property type="term" value="F:dITP diphosphatase activity"/>
    <property type="evidence" value="ECO:0007669"/>
    <property type="project" value="RHEA"/>
</dbReference>
<dbReference type="GO" id="GO:0036220">
    <property type="term" value="F:ITP diphosphatase activity"/>
    <property type="evidence" value="ECO:0007669"/>
    <property type="project" value="RHEA"/>
</dbReference>
<dbReference type="GO" id="GO:0046872">
    <property type="term" value="F:metal ion binding"/>
    <property type="evidence" value="ECO:0007669"/>
    <property type="project" value="UniProtKB-KW"/>
</dbReference>
<dbReference type="GO" id="GO:0047429">
    <property type="term" value="F:nucleoside triphosphate diphosphatase activity"/>
    <property type="evidence" value="ECO:0000318"/>
    <property type="project" value="GO_Central"/>
</dbReference>
<dbReference type="GO" id="GO:0000166">
    <property type="term" value="F:nucleotide binding"/>
    <property type="evidence" value="ECO:0007669"/>
    <property type="project" value="UniProtKB-KW"/>
</dbReference>
<dbReference type="GO" id="GO:0036222">
    <property type="term" value="F:XTP diphosphatase activity"/>
    <property type="evidence" value="ECO:0007669"/>
    <property type="project" value="RHEA"/>
</dbReference>
<dbReference type="GO" id="GO:0009204">
    <property type="term" value="P:deoxyribonucleoside triphosphate catabolic process"/>
    <property type="evidence" value="ECO:0007669"/>
    <property type="project" value="UniProtKB-UniRule"/>
</dbReference>
<dbReference type="GO" id="GO:0009143">
    <property type="term" value="P:nucleoside triphosphate catabolic process"/>
    <property type="evidence" value="ECO:0000318"/>
    <property type="project" value="GO_Central"/>
</dbReference>
<dbReference type="GO" id="GO:0009117">
    <property type="term" value="P:nucleotide metabolic process"/>
    <property type="evidence" value="ECO:0007669"/>
    <property type="project" value="UniProtKB-KW"/>
</dbReference>
<dbReference type="CDD" id="cd00515">
    <property type="entry name" value="HAM1"/>
    <property type="match status" value="1"/>
</dbReference>
<dbReference type="FunFam" id="3.90.950.10:FF:000003">
    <property type="entry name" value="Inosine triphosphate pyrophosphatase"/>
    <property type="match status" value="1"/>
</dbReference>
<dbReference type="Gene3D" id="3.90.950.10">
    <property type="match status" value="1"/>
</dbReference>
<dbReference type="HAMAP" id="MF_03148">
    <property type="entry name" value="HAM1_NTPase"/>
    <property type="match status" value="1"/>
</dbReference>
<dbReference type="InterPro" id="IPR027502">
    <property type="entry name" value="ITPase"/>
</dbReference>
<dbReference type="InterPro" id="IPR029001">
    <property type="entry name" value="ITPase-like_fam"/>
</dbReference>
<dbReference type="InterPro" id="IPR002637">
    <property type="entry name" value="RdgB/HAM1"/>
</dbReference>
<dbReference type="NCBIfam" id="TIGR00042">
    <property type="entry name" value="RdgB/HAM1 family non-canonical purine NTP pyrophosphatase"/>
    <property type="match status" value="1"/>
</dbReference>
<dbReference type="PANTHER" id="PTHR11067:SF9">
    <property type="entry name" value="INOSINE TRIPHOSPHATE PYROPHOSPHATASE"/>
    <property type="match status" value="1"/>
</dbReference>
<dbReference type="PANTHER" id="PTHR11067">
    <property type="entry name" value="INOSINE TRIPHOSPHATE PYROPHOSPHATASE/HAM1 PROTEIN"/>
    <property type="match status" value="1"/>
</dbReference>
<dbReference type="Pfam" id="PF01725">
    <property type="entry name" value="Ham1p_like"/>
    <property type="match status" value="1"/>
</dbReference>
<dbReference type="SUPFAM" id="SSF52972">
    <property type="entry name" value="ITPase-like"/>
    <property type="match status" value="1"/>
</dbReference>
<feature type="chain" id="PRO_0000413151" description="Inosine triphosphate pyrophosphatase">
    <location>
        <begin position="1"/>
        <end position="193"/>
    </location>
</feature>
<feature type="binding site" evidence="1">
    <location>
        <begin position="10"/>
        <end position="15"/>
    </location>
    <ligand>
        <name>ITP</name>
        <dbReference type="ChEBI" id="CHEBI:61402"/>
    </ligand>
</feature>
<feature type="binding site" evidence="1">
    <location>
        <position position="42"/>
    </location>
    <ligand>
        <name>Mg(2+)</name>
        <dbReference type="ChEBI" id="CHEBI:18420"/>
    </ligand>
</feature>
<feature type="binding site" evidence="1">
    <location>
        <position position="54"/>
    </location>
    <ligand>
        <name>ITP</name>
        <dbReference type="ChEBI" id="CHEBI:61402"/>
    </ligand>
</feature>
<feature type="binding site" evidence="1">
    <location>
        <begin position="70"/>
        <end position="71"/>
    </location>
    <ligand>
        <name>ITP</name>
        <dbReference type="ChEBI" id="CHEBI:61402"/>
    </ligand>
</feature>
<feature type="binding site" evidence="1">
    <location>
        <position position="87"/>
    </location>
    <ligand>
        <name>ITP</name>
        <dbReference type="ChEBI" id="CHEBI:61402"/>
    </ligand>
</feature>
<feature type="binding site" evidence="1">
    <location>
        <begin position="146"/>
        <end position="149"/>
    </location>
    <ligand>
        <name>ITP</name>
        <dbReference type="ChEBI" id="CHEBI:61402"/>
    </ligand>
</feature>
<feature type="binding site" evidence="1">
    <location>
        <position position="169"/>
    </location>
    <ligand>
        <name>ITP</name>
        <dbReference type="ChEBI" id="CHEBI:61402"/>
    </ligand>
</feature>
<feature type="binding site" evidence="1">
    <location>
        <begin position="174"/>
        <end position="175"/>
    </location>
    <ligand>
        <name>ITP</name>
        <dbReference type="ChEBI" id="CHEBI:61402"/>
    </ligand>
</feature>